<reference key="1">
    <citation type="journal article" date="2005" name="Science">
        <title>The transcriptional landscape of the mammalian genome.</title>
        <authorList>
            <person name="Carninci P."/>
            <person name="Kasukawa T."/>
            <person name="Katayama S."/>
            <person name="Gough J."/>
            <person name="Frith M.C."/>
            <person name="Maeda N."/>
            <person name="Oyama R."/>
            <person name="Ravasi T."/>
            <person name="Lenhard B."/>
            <person name="Wells C."/>
            <person name="Kodzius R."/>
            <person name="Shimokawa K."/>
            <person name="Bajic V.B."/>
            <person name="Brenner S.E."/>
            <person name="Batalov S."/>
            <person name="Forrest A.R."/>
            <person name="Zavolan M."/>
            <person name="Davis M.J."/>
            <person name="Wilming L.G."/>
            <person name="Aidinis V."/>
            <person name="Allen J.E."/>
            <person name="Ambesi-Impiombato A."/>
            <person name="Apweiler R."/>
            <person name="Aturaliya R.N."/>
            <person name="Bailey T.L."/>
            <person name="Bansal M."/>
            <person name="Baxter L."/>
            <person name="Beisel K.W."/>
            <person name="Bersano T."/>
            <person name="Bono H."/>
            <person name="Chalk A.M."/>
            <person name="Chiu K.P."/>
            <person name="Choudhary V."/>
            <person name="Christoffels A."/>
            <person name="Clutterbuck D.R."/>
            <person name="Crowe M.L."/>
            <person name="Dalla E."/>
            <person name="Dalrymple B.P."/>
            <person name="de Bono B."/>
            <person name="Della Gatta G."/>
            <person name="di Bernardo D."/>
            <person name="Down T."/>
            <person name="Engstrom P."/>
            <person name="Fagiolini M."/>
            <person name="Faulkner G."/>
            <person name="Fletcher C.F."/>
            <person name="Fukushima T."/>
            <person name="Furuno M."/>
            <person name="Futaki S."/>
            <person name="Gariboldi M."/>
            <person name="Georgii-Hemming P."/>
            <person name="Gingeras T.R."/>
            <person name="Gojobori T."/>
            <person name="Green R.E."/>
            <person name="Gustincich S."/>
            <person name="Harbers M."/>
            <person name="Hayashi Y."/>
            <person name="Hensch T.K."/>
            <person name="Hirokawa N."/>
            <person name="Hill D."/>
            <person name="Huminiecki L."/>
            <person name="Iacono M."/>
            <person name="Ikeo K."/>
            <person name="Iwama A."/>
            <person name="Ishikawa T."/>
            <person name="Jakt M."/>
            <person name="Kanapin A."/>
            <person name="Katoh M."/>
            <person name="Kawasawa Y."/>
            <person name="Kelso J."/>
            <person name="Kitamura H."/>
            <person name="Kitano H."/>
            <person name="Kollias G."/>
            <person name="Krishnan S.P."/>
            <person name="Kruger A."/>
            <person name="Kummerfeld S.K."/>
            <person name="Kurochkin I.V."/>
            <person name="Lareau L.F."/>
            <person name="Lazarevic D."/>
            <person name="Lipovich L."/>
            <person name="Liu J."/>
            <person name="Liuni S."/>
            <person name="McWilliam S."/>
            <person name="Madan Babu M."/>
            <person name="Madera M."/>
            <person name="Marchionni L."/>
            <person name="Matsuda H."/>
            <person name="Matsuzawa S."/>
            <person name="Miki H."/>
            <person name="Mignone F."/>
            <person name="Miyake S."/>
            <person name="Morris K."/>
            <person name="Mottagui-Tabar S."/>
            <person name="Mulder N."/>
            <person name="Nakano N."/>
            <person name="Nakauchi H."/>
            <person name="Ng P."/>
            <person name="Nilsson R."/>
            <person name="Nishiguchi S."/>
            <person name="Nishikawa S."/>
            <person name="Nori F."/>
            <person name="Ohara O."/>
            <person name="Okazaki Y."/>
            <person name="Orlando V."/>
            <person name="Pang K.C."/>
            <person name="Pavan W.J."/>
            <person name="Pavesi G."/>
            <person name="Pesole G."/>
            <person name="Petrovsky N."/>
            <person name="Piazza S."/>
            <person name="Reed J."/>
            <person name="Reid J.F."/>
            <person name="Ring B.Z."/>
            <person name="Ringwald M."/>
            <person name="Rost B."/>
            <person name="Ruan Y."/>
            <person name="Salzberg S.L."/>
            <person name="Sandelin A."/>
            <person name="Schneider C."/>
            <person name="Schoenbach C."/>
            <person name="Sekiguchi K."/>
            <person name="Semple C.A."/>
            <person name="Seno S."/>
            <person name="Sessa L."/>
            <person name="Sheng Y."/>
            <person name="Shibata Y."/>
            <person name="Shimada H."/>
            <person name="Shimada K."/>
            <person name="Silva D."/>
            <person name="Sinclair B."/>
            <person name="Sperling S."/>
            <person name="Stupka E."/>
            <person name="Sugiura K."/>
            <person name="Sultana R."/>
            <person name="Takenaka Y."/>
            <person name="Taki K."/>
            <person name="Tammoja K."/>
            <person name="Tan S.L."/>
            <person name="Tang S."/>
            <person name="Taylor M.S."/>
            <person name="Tegner J."/>
            <person name="Teichmann S.A."/>
            <person name="Ueda H.R."/>
            <person name="van Nimwegen E."/>
            <person name="Verardo R."/>
            <person name="Wei C.L."/>
            <person name="Yagi K."/>
            <person name="Yamanishi H."/>
            <person name="Zabarovsky E."/>
            <person name="Zhu S."/>
            <person name="Zimmer A."/>
            <person name="Hide W."/>
            <person name="Bult C."/>
            <person name="Grimmond S.M."/>
            <person name="Teasdale R.D."/>
            <person name="Liu E.T."/>
            <person name="Brusic V."/>
            <person name="Quackenbush J."/>
            <person name="Wahlestedt C."/>
            <person name="Mattick J.S."/>
            <person name="Hume D.A."/>
            <person name="Kai C."/>
            <person name="Sasaki D."/>
            <person name="Tomaru Y."/>
            <person name="Fukuda S."/>
            <person name="Kanamori-Katayama M."/>
            <person name="Suzuki M."/>
            <person name="Aoki J."/>
            <person name="Arakawa T."/>
            <person name="Iida J."/>
            <person name="Imamura K."/>
            <person name="Itoh M."/>
            <person name="Kato T."/>
            <person name="Kawaji H."/>
            <person name="Kawagashira N."/>
            <person name="Kawashima T."/>
            <person name="Kojima M."/>
            <person name="Kondo S."/>
            <person name="Konno H."/>
            <person name="Nakano K."/>
            <person name="Ninomiya N."/>
            <person name="Nishio T."/>
            <person name="Okada M."/>
            <person name="Plessy C."/>
            <person name="Shibata K."/>
            <person name="Shiraki T."/>
            <person name="Suzuki S."/>
            <person name="Tagami M."/>
            <person name="Waki K."/>
            <person name="Watahiki A."/>
            <person name="Okamura-Oho Y."/>
            <person name="Suzuki H."/>
            <person name="Kawai J."/>
            <person name="Hayashizaki Y."/>
        </authorList>
    </citation>
    <scope>NUCLEOTIDE SEQUENCE [LARGE SCALE MRNA]</scope>
    <source>
        <strain>NOD</strain>
    </source>
</reference>
<reference key="2">
    <citation type="journal article" date="2004" name="Genome Res.">
        <title>The status, quality, and expansion of the NIH full-length cDNA project: the Mammalian Gene Collection (MGC).</title>
        <authorList>
            <consortium name="The MGC Project Team"/>
        </authorList>
    </citation>
    <scope>NUCLEOTIDE SEQUENCE [LARGE SCALE MRNA]</scope>
    <source>
        <strain>FVB/N</strain>
        <tissue>Mammary tumor</tissue>
    </source>
</reference>
<proteinExistence type="evidence at transcript level"/>
<protein>
    <recommendedName>
        <fullName>Molybdate-anion transporter</fullName>
    </recommendedName>
    <alternativeName>
        <fullName>Major facilitator superfamily domain-containing protein 5</fullName>
    </alternativeName>
    <alternativeName>
        <fullName>Molybdate transporter 2 homolog</fullName>
    </alternativeName>
</protein>
<comment type="function">
    <text evidence="1">Mediates high-affinity intracellular uptake of the rare oligo-element molybdenum.</text>
</comment>
<comment type="subcellular location">
    <subcellularLocation>
        <location evidence="1">Cell membrane</location>
        <topology evidence="1">Multi-pass membrane protein</topology>
    </subcellularLocation>
</comment>
<comment type="similarity">
    <text evidence="3">Belongs to the major facilitator superfamily.</text>
</comment>
<dbReference type="EMBL" id="AK089268">
    <property type="protein sequence ID" value="BAC40821.1"/>
    <property type="molecule type" value="mRNA"/>
</dbReference>
<dbReference type="EMBL" id="BC009140">
    <property type="protein sequence ID" value="AAH09140.1"/>
    <property type="molecule type" value="mRNA"/>
</dbReference>
<dbReference type="CCDS" id="CCDS27877.1"/>
<dbReference type="RefSeq" id="NP_598861.1">
    <property type="nucleotide sequence ID" value="NM_134100.4"/>
</dbReference>
<dbReference type="SMR" id="Q921Y4"/>
<dbReference type="BioGRID" id="222987">
    <property type="interactions" value="1"/>
</dbReference>
<dbReference type="FunCoup" id="Q921Y4">
    <property type="interactions" value="1153"/>
</dbReference>
<dbReference type="STRING" id="10090.ENSMUSP00000061997"/>
<dbReference type="iPTMnet" id="Q921Y4"/>
<dbReference type="PhosphoSitePlus" id="Q921Y4"/>
<dbReference type="SwissPalm" id="Q921Y4"/>
<dbReference type="jPOST" id="Q921Y4"/>
<dbReference type="PaxDb" id="10090-ENSMUSP00000061997"/>
<dbReference type="PeptideAtlas" id="Q921Y4"/>
<dbReference type="ProteomicsDB" id="292231"/>
<dbReference type="Pumba" id="Q921Y4"/>
<dbReference type="Antibodypedia" id="48343">
    <property type="antibodies" value="81 antibodies from 13 providers"/>
</dbReference>
<dbReference type="Ensembl" id="ENSMUST00000051341.6">
    <property type="protein sequence ID" value="ENSMUSP00000061997.5"/>
    <property type="gene ID" value="ENSMUSG00000045665.6"/>
</dbReference>
<dbReference type="GeneID" id="106073"/>
<dbReference type="KEGG" id="mmu:106073"/>
<dbReference type="UCSC" id="uc007xve.1">
    <property type="organism name" value="mouse"/>
</dbReference>
<dbReference type="AGR" id="MGI:2145901"/>
<dbReference type="CTD" id="84975"/>
<dbReference type="MGI" id="MGI:2145901">
    <property type="gene designation" value="Mfsd5"/>
</dbReference>
<dbReference type="VEuPathDB" id="HostDB:ENSMUSG00000045665"/>
<dbReference type="eggNOG" id="KOG4332">
    <property type="taxonomic scope" value="Eukaryota"/>
</dbReference>
<dbReference type="GeneTree" id="ENSGT00390000012629"/>
<dbReference type="HOGENOM" id="CLU_034007_2_0_1"/>
<dbReference type="InParanoid" id="Q921Y4"/>
<dbReference type="OMA" id="CCGWVVL"/>
<dbReference type="OrthoDB" id="263957at2759"/>
<dbReference type="PhylomeDB" id="Q921Y4"/>
<dbReference type="TreeFam" id="TF328562"/>
<dbReference type="BioGRID-ORCS" id="106073">
    <property type="hits" value="3 hits in 76 CRISPR screens"/>
</dbReference>
<dbReference type="ChiTaRS" id="Mfsd5">
    <property type="organism name" value="mouse"/>
</dbReference>
<dbReference type="PRO" id="PR:Q921Y4"/>
<dbReference type="Proteomes" id="UP000000589">
    <property type="component" value="Chromosome 15"/>
</dbReference>
<dbReference type="RNAct" id="Q921Y4">
    <property type="molecule type" value="protein"/>
</dbReference>
<dbReference type="Bgee" id="ENSMUSG00000045665">
    <property type="expression patterns" value="Expressed in lip and 261 other cell types or tissues"/>
</dbReference>
<dbReference type="GO" id="GO:0005886">
    <property type="term" value="C:plasma membrane"/>
    <property type="evidence" value="ECO:0007669"/>
    <property type="project" value="UniProtKB-SubCell"/>
</dbReference>
<dbReference type="GO" id="GO:0015098">
    <property type="term" value="F:molybdate ion transmembrane transporter activity"/>
    <property type="evidence" value="ECO:0007669"/>
    <property type="project" value="Ensembl"/>
</dbReference>
<dbReference type="GO" id="GO:0006811">
    <property type="term" value="P:monoatomic ion transport"/>
    <property type="evidence" value="ECO:0007669"/>
    <property type="project" value="UniProtKB-KW"/>
</dbReference>
<dbReference type="GO" id="GO:0032094">
    <property type="term" value="P:response to food"/>
    <property type="evidence" value="ECO:0000315"/>
    <property type="project" value="MGI"/>
</dbReference>
<dbReference type="GO" id="GO:0042594">
    <property type="term" value="P:response to starvation"/>
    <property type="evidence" value="ECO:0000315"/>
    <property type="project" value="MGI"/>
</dbReference>
<dbReference type="CDD" id="cd17487">
    <property type="entry name" value="MFS_MFSD5_like"/>
    <property type="match status" value="1"/>
</dbReference>
<dbReference type="FunFam" id="1.20.1250.20:FF:000192">
    <property type="entry name" value="Major facilitator superfamily domain-containing 5"/>
    <property type="match status" value="1"/>
</dbReference>
<dbReference type="Gene3D" id="1.20.1250.20">
    <property type="entry name" value="MFS general substrate transporter like domains"/>
    <property type="match status" value="1"/>
</dbReference>
<dbReference type="InterPro" id="IPR036259">
    <property type="entry name" value="MFS_trans_sf"/>
</dbReference>
<dbReference type="InterPro" id="IPR008509">
    <property type="entry name" value="MOT2/MFSD5"/>
</dbReference>
<dbReference type="PANTHER" id="PTHR23516:SF1">
    <property type="entry name" value="MOLYBDATE-ANION TRANSPORTER"/>
    <property type="match status" value="1"/>
</dbReference>
<dbReference type="PANTHER" id="PTHR23516">
    <property type="entry name" value="SAM (S-ADENOSYL METHIONINE) TRANSPORTER"/>
    <property type="match status" value="1"/>
</dbReference>
<dbReference type="Pfam" id="PF05631">
    <property type="entry name" value="MFS_5"/>
    <property type="match status" value="1"/>
</dbReference>
<dbReference type="SUPFAM" id="SSF103473">
    <property type="entry name" value="MFS general substrate transporter"/>
    <property type="match status" value="1"/>
</dbReference>
<keyword id="KW-1003">Cell membrane</keyword>
<keyword id="KW-0406">Ion transport</keyword>
<keyword id="KW-0472">Membrane</keyword>
<keyword id="KW-1185">Reference proteome</keyword>
<keyword id="KW-0812">Transmembrane</keyword>
<keyword id="KW-1133">Transmembrane helix</keyword>
<keyword id="KW-0813">Transport</keyword>
<organism>
    <name type="scientific">Mus musculus</name>
    <name type="common">Mouse</name>
    <dbReference type="NCBI Taxonomy" id="10090"/>
    <lineage>
        <taxon>Eukaryota</taxon>
        <taxon>Metazoa</taxon>
        <taxon>Chordata</taxon>
        <taxon>Craniata</taxon>
        <taxon>Vertebrata</taxon>
        <taxon>Euteleostomi</taxon>
        <taxon>Mammalia</taxon>
        <taxon>Eutheria</taxon>
        <taxon>Euarchontoglires</taxon>
        <taxon>Glires</taxon>
        <taxon>Rodentia</taxon>
        <taxon>Myomorpha</taxon>
        <taxon>Muroidea</taxon>
        <taxon>Muridae</taxon>
        <taxon>Murinae</taxon>
        <taxon>Mus</taxon>
        <taxon>Mus</taxon>
    </lineage>
</organism>
<evidence type="ECO:0000250" key="1"/>
<evidence type="ECO:0000255" key="2"/>
<evidence type="ECO:0000305" key="3"/>
<name>MFSD5_MOUSE</name>
<accession>Q921Y4</accession>
<gene>
    <name type="primary">Mfsd5</name>
</gene>
<sequence length="450" mass="49679">MLVTAYLSFVGLLASCLGLELSRCRARPPGRACSNPSFLQFQLDFYQVYFLALAADWLQAPYLYKLYQHYHFLEGQIAILYVCGLASTVLFGLVASSLVDWLGRKKSCVLFSLTYSLCCITKLSQDYFVLLVGRALGGLSTALLFSAFEAWYIHEHVERHDFPAEWIPATFARAAFWNHVLAVAAGVAAEAVASWIGLGPVAPFVAAIPLLALTGALALRNWGENYDRQRAFSKTCAGGLRCLLSDRRVLLLGVIQALFESVIFIFVFLWTPVLDPHGAPLGIVFSSFMAASLLGSSLYRIATSKRYHLQPMHLLSLAVLIVVFSLFMLTFSTSPGQENPVESFIAFLLIELACGLYFPSMSFLRRKVIPETEQAGVLNWFRVPLHLLACLGLLVLHDSDRKTGTRNMFSICSAVMVTTLLAVAGLFTVVRHDAELRVPSPTGEPYAPEL</sequence>
<feature type="chain" id="PRO_0000273402" description="Molybdate-anion transporter">
    <location>
        <begin position="1"/>
        <end position="450"/>
    </location>
</feature>
<feature type="transmembrane region" description="Helical" evidence="2">
    <location>
        <begin position="1"/>
        <end position="21"/>
    </location>
</feature>
<feature type="transmembrane region" description="Helical" evidence="2">
    <location>
        <begin position="38"/>
        <end position="58"/>
    </location>
</feature>
<feature type="transmembrane region" description="Helical" evidence="2">
    <location>
        <begin position="79"/>
        <end position="99"/>
    </location>
</feature>
<feature type="transmembrane region" description="Helical" evidence="2">
    <location>
        <begin position="128"/>
        <end position="148"/>
    </location>
</feature>
<feature type="transmembrane region" description="Helical" evidence="2">
    <location>
        <begin position="167"/>
        <end position="187"/>
    </location>
</feature>
<feature type="transmembrane region" description="Helical" evidence="2">
    <location>
        <begin position="191"/>
        <end position="211"/>
    </location>
</feature>
<feature type="transmembrane region" description="Helical" evidence="2">
    <location>
        <begin position="249"/>
        <end position="269"/>
    </location>
</feature>
<feature type="transmembrane region" description="Helical" evidence="2">
    <location>
        <begin position="278"/>
        <end position="298"/>
    </location>
</feature>
<feature type="transmembrane region" description="Helical" evidence="2">
    <location>
        <begin position="311"/>
        <end position="331"/>
    </location>
</feature>
<feature type="transmembrane region" description="Helical" evidence="2">
    <location>
        <begin position="344"/>
        <end position="364"/>
    </location>
</feature>
<feature type="transmembrane region" description="Helical" evidence="2">
    <location>
        <begin position="376"/>
        <end position="396"/>
    </location>
</feature>
<feature type="transmembrane region" description="Helical" evidence="2">
    <location>
        <begin position="409"/>
        <end position="429"/>
    </location>
</feature>